<protein>
    <recommendedName>
        <fullName>NADH-dependent phenylglyoxylate dehydrogenase subunit epsilon</fullName>
        <ecNumber>1.2.1.58</ecNumber>
    </recommendedName>
    <alternativeName>
        <fullName>Phenylglyoxylate:NAD oxidoreductase</fullName>
    </alternativeName>
    <alternativeName>
        <fullName>Phenylglyoxylate:acceptor oxidoreductase</fullName>
    </alternativeName>
</protein>
<feature type="chain" id="PRO_0000418539" description="NADH-dependent phenylglyoxylate dehydrogenase subunit epsilon">
    <location>
        <begin position="1"/>
        <end position="421"/>
    </location>
</feature>
<feature type="binding site" evidence="1">
    <location>
        <begin position="15"/>
        <end position="18"/>
    </location>
    <ligand>
        <name>FAD</name>
        <dbReference type="ChEBI" id="CHEBI:57692"/>
    </ligand>
</feature>
<feature type="binding site" evidence="1">
    <location>
        <begin position="39"/>
        <end position="40"/>
    </location>
    <ligand>
        <name>FAD</name>
        <dbReference type="ChEBI" id="CHEBI:57692"/>
    </ligand>
</feature>
<feature type="binding site" evidence="1">
    <location>
        <begin position="279"/>
        <end position="297"/>
    </location>
    <ligand>
        <name>FAD</name>
        <dbReference type="ChEBI" id="CHEBI:57692"/>
    </ligand>
</feature>
<evidence type="ECO:0000250" key="1"/>
<evidence type="ECO:0000269" key="2">
    <source>
    </source>
</evidence>
<evidence type="ECO:0000305" key="3"/>
<evidence type="ECO:0000305" key="4">
    <source>
    </source>
</evidence>
<comment type="function">
    <text evidence="2">Involved in the anaerobic metabolism of phenylalanine and phenylacetate. Catalyzes the oxidative decarboxylation of phenylglyoxylate to benzoyl-CoA and CO(2). It can also react slowly with 2-oxo-3-methylbutanoate and use different electron acceptors such as benzyl viologen, methyl viologen, FAD or FMN, but NAD seems to be the physiological electron acceptor. Also catalyzes an isotope exchange between CO(2) and the carboxyl group which proves partial or complete reversibility of the oxidative decarboxylation reaction.</text>
</comment>
<comment type="catalytic activity">
    <reaction evidence="2">
        <text>phenylglyoxylate + NAD(+) + CoA = benzoyl-CoA + CO2 + NADH</text>
        <dbReference type="Rhea" id="RHEA:10372"/>
        <dbReference type="ChEBI" id="CHEBI:16526"/>
        <dbReference type="ChEBI" id="CHEBI:36656"/>
        <dbReference type="ChEBI" id="CHEBI:57287"/>
        <dbReference type="ChEBI" id="CHEBI:57369"/>
        <dbReference type="ChEBI" id="CHEBI:57540"/>
        <dbReference type="ChEBI" id="CHEBI:57945"/>
        <dbReference type="EC" id="1.2.1.58"/>
    </reaction>
</comment>
<comment type="cofactor">
    <cofactor evidence="4">
        <name>FAD</name>
        <dbReference type="ChEBI" id="CHEBI:57692"/>
    </cofactor>
</comment>
<comment type="activity regulation">
    <text evidence="2">Activated by magnesium ions and thiamine diphosphate.</text>
</comment>
<comment type="biophysicochemical properties">
    <kinetics>
        <KM evidence="2">45 uM for phenylglyoxylate (under anaerobic conditions at 37 degrees Celsius and pH 7.8)</KM>
        <KM evidence="2">55 uM for coenzyme-A (under anaerobic conditions at 37 degrees Celsius and pH 7.8)</KM>
        <KM evidence="2">74 uM for NAD (under anaerobic conditions at 37 degrees Celsius and pH 7.8)</KM>
    </kinetics>
    <phDependence>
        <text evidence="2">Optimum pH is 8 when measured with benzyl viologen. Half-maximal activities are obtained at pH 9 and pH 6.8.</text>
    </phDependence>
</comment>
<comment type="subunit">
    <text evidence="2">Dimer of heteropentamers composed of an alpha (PadG), a beta (PadI), a gamma (PadE), a delta (PadF) and an epsilon (PadH) subunit.</text>
</comment>
<comment type="induction">
    <text evidence="2">Induced anaerobically by phenylalanine, phenylacetate or phenylglyoxylate.</text>
</comment>
<comment type="similarity">
    <text evidence="3">Belongs to the FAD-dependent oxidoreductase family.</text>
</comment>
<keyword id="KW-0903">Direct protein sequencing</keyword>
<keyword id="KW-0274">FAD</keyword>
<keyword id="KW-0285">Flavoprotein</keyword>
<keyword id="KW-0520">NAD</keyword>
<keyword id="KW-0560">Oxidoreductase</keyword>
<gene>
    <name type="primary">padH</name>
</gene>
<sequence length="421" mass="44864">MDRAIEHTKYLIAGSSHAALEAINAIRMHDAEGPITVVTRDAHLPYSPTVLPYVVSGKSAPERIFLRDDDFFARNKVAYRPKAALKALHADRNTAELADGSSVVYEKLLLATGASPAIPPIPGIDTVSYHVLRTLDDALKLRGAIAESKQAVVLGAGLVGMHAAENLVKAGATVTIVEMSEQLTSGYFDKVAADMIEQAFRDAGGKIMTGSRVVRLEPTAAGAKLTLENGTTLEADLLLVATGVKPEMDYLNGSGVEHAQGILVDDRMQTTAENVWAAATAQARGFFTGTKVMNAILPDATIQGRVAGMAMAGDPGVKDYAGAVPLNTYHFFGRHAISVGSSTVPEGGEVVTRFDEKTGRYLKAIFAADGPLTGIFGVNEFFDGGVMAQLILRRTDLTPLRSRFVANPLAVGREIMSQTWR</sequence>
<organism>
    <name type="scientific">Aromatoleum evansii</name>
    <name type="common">Azoarcus evansii</name>
    <dbReference type="NCBI Taxonomy" id="59406"/>
    <lineage>
        <taxon>Bacteria</taxon>
        <taxon>Pseudomonadati</taxon>
        <taxon>Pseudomonadota</taxon>
        <taxon>Betaproteobacteria</taxon>
        <taxon>Rhodocyclales</taxon>
        <taxon>Rhodocyclaceae</taxon>
        <taxon>Aromatoleum</taxon>
    </lineage>
</organism>
<dbReference type="EC" id="1.2.1.58"/>
<dbReference type="EMBL" id="AJ428571">
    <property type="protein sequence ID" value="CAD21692.1"/>
    <property type="molecule type" value="Genomic_DNA"/>
</dbReference>
<dbReference type="SMR" id="Q8L3B0"/>
<dbReference type="KEGG" id="ag:CAD21692"/>
<dbReference type="BioCyc" id="MetaCyc:MONOMER-124224"/>
<dbReference type="GO" id="GO:0051287">
    <property type="term" value="F:NAD binding"/>
    <property type="evidence" value="ECO:0000314"/>
    <property type="project" value="UniProtKB"/>
</dbReference>
<dbReference type="GO" id="GO:0047110">
    <property type="term" value="F:phenylglyoxylate dehydrogenase (acylating) activity"/>
    <property type="evidence" value="ECO:0000314"/>
    <property type="project" value="UniProtKB"/>
</dbReference>
<dbReference type="GO" id="GO:0006558">
    <property type="term" value="P:L-phenylalanine metabolic process"/>
    <property type="evidence" value="ECO:0000314"/>
    <property type="project" value="UniProtKB"/>
</dbReference>
<dbReference type="Gene3D" id="3.50.50.60">
    <property type="entry name" value="FAD/NAD(P)-binding domain"/>
    <property type="match status" value="2"/>
</dbReference>
<dbReference type="InterPro" id="IPR050260">
    <property type="entry name" value="FAD-bd_OxRdtase"/>
</dbReference>
<dbReference type="InterPro" id="IPR036188">
    <property type="entry name" value="FAD/NAD-bd_sf"/>
</dbReference>
<dbReference type="InterPro" id="IPR023753">
    <property type="entry name" value="FAD/NAD-binding_dom"/>
</dbReference>
<dbReference type="InterPro" id="IPR054806">
    <property type="entry name" value="PadH"/>
</dbReference>
<dbReference type="NCBIfam" id="NF045765">
    <property type="entry name" value="PhenlGlyoxDHPadH"/>
    <property type="match status" value="1"/>
</dbReference>
<dbReference type="PANTHER" id="PTHR43429:SF3">
    <property type="entry name" value="NITRITE REDUCTASE [NAD(P)H]"/>
    <property type="match status" value="1"/>
</dbReference>
<dbReference type="PANTHER" id="PTHR43429">
    <property type="entry name" value="PYRIDINE NUCLEOTIDE-DISULFIDE OXIDOREDUCTASE DOMAIN-CONTAINING"/>
    <property type="match status" value="1"/>
</dbReference>
<dbReference type="Pfam" id="PF07992">
    <property type="entry name" value="Pyr_redox_2"/>
    <property type="match status" value="1"/>
</dbReference>
<dbReference type="PRINTS" id="PR00368">
    <property type="entry name" value="FADPNR"/>
</dbReference>
<dbReference type="PRINTS" id="PR00411">
    <property type="entry name" value="PNDRDTASEI"/>
</dbReference>
<dbReference type="SUPFAM" id="SSF51905">
    <property type="entry name" value="FAD/NAD(P)-binding domain"/>
    <property type="match status" value="2"/>
</dbReference>
<name>PADH_AROEV</name>
<accession>Q8L3B0</accession>
<reference key="1">
    <citation type="submission" date="2002-01" db="EMBL/GenBank/DDBJ databases">
        <title>Characterization of genes involved in anaerobic phenylacetate degradation in Azoarcus evansii.</title>
        <authorList>
            <person name="Haas S."/>
            <person name="Hammer E."/>
            <person name="Herrmann H."/>
            <person name="Burchhardt G."/>
        </authorList>
    </citation>
    <scope>NUCLEOTIDE SEQUENCE [GENOMIC DNA]</scope>
    <source>
        <strain>DSM 6898 / NBRC 107771 / KB740</strain>
    </source>
</reference>
<reference key="2">
    <citation type="journal article" date="1998" name="Eur. J. Biochem.">
        <title>Phenylglyoxylate:NAD+ oxidoreductase (CoA benzoylating), a new enzyme of anaerobic phenylalanine metabolism in the denitrifying bacterium Azoarcus evansii.</title>
        <authorList>
            <person name="Hirsch W."/>
            <person name="Schagger H."/>
            <person name="Fuchs G."/>
        </authorList>
    </citation>
    <scope>PROTEIN SEQUENCE OF 1-12</scope>
    <scope>FUNCTION AS A PHENYLGLYOXYLATE DEHYDROGENASE</scope>
    <scope>CATALYTIC ACTIVITY</scope>
    <scope>BIOPHYSICOCHEMICAL PROPERTIES</scope>
    <scope>COFACTOR</scope>
    <scope>ACTIVITY REGULATION</scope>
    <scope>SUBSTRATE SPECIFICITY</scope>
    <scope>SUBUNIT</scope>
    <scope>INDUCTION</scope>
    <source>
        <strain>DSM 6898 / NBRC 107771 / KB740</strain>
    </source>
</reference>
<proteinExistence type="evidence at protein level"/>